<accession>Q5P9F9</accession>
<keyword id="KW-0963">Cytoplasm</keyword>
<keyword id="KW-0489">Methyltransferase</keyword>
<keyword id="KW-0949">S-adenosyl-L-methionine</keyword>
<keyword id="KW-0808">Transferase</keyword>
<keyword id="KW-0819">tRNA processing</keyword>
<comment type="function">
    <text evidence="1">Specifically methylates guanosine-37 in various tRNAs.</text>
</comment>
<comment type="catalytic activity">
    <reaction evidence="1">
        <text>guanosine(37) in tRNA + S-adenosyl-L-methionine = N(1)-methylguanosine(37) in tRNA + S-adenosyl-L-homocysteine + H(+)</text>
        <dbReference type="Rhea" id="RHEA:36899"/>
        <dbReference type="Rhea" id="RHEA-COMP:10145"/>
        <dbReference type="Rhea" id="RHEA-COMP:10147"/>
        <dbReference type="ChEBI" id="CHEBI:15378"/>
        <dbReference type="ChEBI" id="CHEBI:57856"/>
        <dbReference type="ChEBI" id="CHEBI:59789"/>
        <dbReference type="ChEBI" id="CHEBI:73542"/>
        <dbReference type="ChEBI" id="CHEBI:74269"/>
        <dbReference type="EC" id="2.1.1.228"/>
    </reaction>
</comment>
<comment type="subunit">
    <text evidence="1">Homodimer.</text>
</comment>
<comment type="subcellular location">
    <subcellularLocation>
        <location evidence="1">Cytoplasm</location>
    </subcellularLocation>
</comment>
<comment type="similarity">
    <text evidence="1">Belongs to the RNA methyltransferase TrmD family.</text>
</comment>
<feature type="chain" id="PRO_0000060316" description="tRNA (guanine-N(1)-)-methyltransferase">
    <location>
        <begin position="1"/>
        <end position="235"/>
    </location>
</feature>
<feature type="binding site" evidence="1">
    <location>
        <position position="112"/>
    </location>
    <ligand>
        <name>S-adenosyl-L-methionine</name>
        <dbReference type="ChEBI" id="CHEBI:59789"/>
    </ligand>
</feature>
<feature type="binding site" evidence="1">
    <location>
        <begin position="132"/>
        <end position="137"/>
    </location>
    <ligand>
        <name>S-adenosyl-L-methionine</name>
        <dbReference type="ChEBI" id="CHEBI:59789"/>
    </ligand>
</feature>
<name>TRMD_ANAMM</name>
<organism>
    <name type="scientific">Anaplasma marginale (strain St. Maries)</name>
    <dbReference type="NCBI Taxonomy" id="234826"/>
    <lineage>
        <taxon>Bacteria</taxon>
        <taxon>Pseudomonadati</taxon>
        <taxon>Pseudomonadota</taxon>
        <taxon>Alphaproteobacteria</taxon>
        <taxon>Rickettsiales</taxon>
        <taxon>Anaplasmataceae</taxon>
        <taxon>Anaplasma</taxon>
    </lineage>
</organism>
<sequence>MIFNVLTIFPDMFPGPLGYSTVGNALRKGLWSLNVVDIRSFASDKHSTVDDKPYGGGPGMLMKADVLGRCIDSVLEAHPDTRLIYTSPKGKQFTQDMSRQIVHFGNITLLCGRFEGIDERVVDVYNFQEVSIGDYVISGGELAAMVVIDSCVRMVTGVIGNKDSLNRESFDCGLEYPQYTRPASWKGVSVPDVLLRGNHKETELWRCKMSRIITERRRPDLLKDCGGEEEGSSNE</sequence>
<proteinExistence type="inferred from homology"/>
<dbReference type="EC" id="2.1.1.228" evidence="1"/>
<dbReference type="EMBL" id="CP000030">
    <property type="protein sequence ID" value="AAV87071.1"/>
    <property type="molecule type" value="Genomic_DNA"/>
</dbReference>
<dbReference type="RefSeq" id="WP_010266444.1">
    <property type="nucleotide sequence ID" value="NZ_AFMU01000059.1"/>
</dbReference>
<dbReference type="SMR" id="Q5P9F9"/>
<dbReference type="KEGG" id="ama:AM1270"/>
<dbReference type="HOGENOM" id="CLU_047363_0_1_5"/>
<dbReference type="GO" id="GO:0005829">
    <property type="term" value="C:cytosol"/>
    <property type="evidence" value="ECO:0007669"/>
    <property type="project" value="TreeGrafter"/>
</dbReference>
<dbReference type="GO" id="GO:0052906">
    <property type="term" value="F:tRNA (guanine(37)-N1)-methyltransferase activity"/>
    <property type="evidence" value="ECO:0007669"/>
    <property type="project" value="UniProtKB-UniRule"/>
</dbReference>
<dbReference type="GO" id="GO:0002939">
    <property type="term" value="P:tRNA N1-guanine methylation"/>
    <property type="evidence" value="ECO:0007669"/>
    <property type="project" value="TreeGrafter"/>
</dbReference>
<dbReference type="CDD" id="cd18080">
    <property type="entry name" value="TrmD-like"/>
    <property type="match status" value="1"/>
</dbReference>
<dbReference type="FunFam" id="3.40.1280.10:FF:000001">
    <property type="entry name" value="tRNA (guanine-N(1)-)-methyltransferase"/>
    <property type="match status" value="1"/>
</dbReference>
<dbReference type="Gene3D" id="3.40.1280.10">
    <property type="match status" value="1"/>
</dbReference>
<dbReference type="Gene3D" id="1.10.1270.20">
    <property type="entry name" value="tRNA(m1g37)methyltransferase, domain 2"/>
    <property type="match status" value="1"/>
</dbReference>
<dbReference type="HAMAP" id="MF_00605">
    <property type="entry name" value="TrmD"/>
    <property type="match status" value="1"/>
</dbReference>
<dbReference type="InterPro" id="IPR029028">
    <property type="entry name" value="Alpha/beta_knot_MTases"/>
</dbReference>
<dbReference type="InterPro" id="IPR023148">
    <property type="entry name" value="tRNA_m1G_MeTrfase_C_sf"/>
</dbReference>
<dbReference type="InterPro" id="IPR002649">
    <property type="entry name" value="tRNA_m1G_MeTrfase_TrmD"/>
</dbReference>
<dbReference type="InterPro" id="IPR029026">
    <property type="entry name" value="tRNA_m1G_MTases_N"/>
</dbReference>
<dbReference type="InterPro" id="IPR016009">
    <property type="entry name" value="tRNA_MeTrfase_TRMD/TRM10"/>
</dbReference>
<dbReference type="NCBIfam" id="NF000648">
    <property type="entry name" value="PRK00026.1"/>
    <property type="match status" value="1"/>
</dbReference>
<dbReference type="NCBIfam" id="TIGR00088">
    <property type="entry name" value="trmD"/>
    <property type="match status" value="1"/>
</dbReference>
<dbReference type="PANTHER" id="PTHR46417">
    <property type="entry name" value="TRNA (GUANINE-N(1)-)-METHYLTRANSFERASE"/>
    <property type="match status" value="1"/>
</dbReference>
<dbReference type="PANTHER" id="PTHR46417:SF1">
    <property type="entry name" value="TRNA (GUANINE-N(1)-)-METHYLTRANSFERASE"/>
    <property type="match status" value="1"/>
</dbReference>
<dbReference type="Pfam" id="PF01746">
    <property type="entry name" value="tRNA_m1G_MT"/>
    <property type="match status" value="1"/>
</dbReference>
<dbReference type="PIRSF" id="PIRSF000386">
    <property type="entry name" value="tRNA_mtase"/>
    <property type="match status" value="1"/>
</dbReference>
<dbReference type="SUPFAM" id="SSF75217">
    <property type="entry name" value="alpha/beta knot"/>
    <property type="match status" value="1"/>
</dbReference>
<gene>
    <name evidence="1" type="primary">trmD</name>
    <name type="ordered locus">AM1270</name>
</gene>
<reference key="1">
    <citation type="journal article" date="2005" name="Proc. Natl. Acad. Sci. U.S.A.">
        <title>Complete genome sequencing of Anaplasma marginale reveals that the surface is skewed to two superfamilies of outer membrane proteins.</title>
        <authorList>
            <person name="Brayton K.A."/>
            <person name="Kappmeyer L.S."/>
            <person name="Herndon D.R."/>
            <person name="Dark M.J."/>
            <person name="Tibbals D.L."/>
            <person name="Palmer G.H."/>
            <person name="McGuire T.C."/>
            <person name="Knowles D.P. Jr."/>
        </authorList>
    </citation>
    <scope>NUCLEOTIDE SEQUENCE [LARGE SCALE GENOMIC DNA]</scope>
    <source>
        <strain>St. Maries</strain>
    </source>
</reference>
<protein>
    <recommendedName>
        <fullName evidence="1">tRNA (guanine-N(1)-)-methyltransferase</fullName>
        <ecNumber evidence="1">2.1.1.228</ecNumber>
    </recommendedName>
    <alternativeName>
        <fullName evidence="1">M1G-methyltransferase</fullName>
    </alternativeName>
    <alternativeName>
        <fullName evidence="1">tRNA [GM37] methyltransferase</fullName>
    </alternativeName>
</protein>
<evidence type="ECO:0000255" key="1">
    <source>
        <dbReference type="HAMAP-Rule" id="MF_00605"/>
    </source>
</evidence>